<sequence>MTISLMIEKKCERSFFSMNAIIHGIVLAFGLILPLGVQNVFIFQQGALQKHIWRALPAVISASVCDTLLIVLAVAGVSVIVQELPVFETVMMAGGFLFLLYMGWVTWNIRPNTSQNEKHTFTPKKQAAFAAAVSLLNPHAILDTIGVIGTSSLQYSGLEKWLFMAACIAVSWIWFISLAIAGRLFQTIDTSGRLMLIVNKCSAAVMWAAAGYFGVSLFCN</sequence>
<evidence type="ECO:0000255" key="1"/>
<evidence type="ECO:0000305" key="2"/>
<feature type="chain" id="PRO_0000360795" description="Putative amino-acid transporter YisU">
    <location>
        <begin position="1"/>
        <end position="220"/>
    </location>
</feature>
<feature type="transmembrane region" description="Helical" evidence="1">
    <location>
        <begin position="15"/>
        <end position="35"/>
    </location>
</feature>
<feature type="transmembrane region" description="Helical" evidence="1">
    <location>
        <begin position="67"/>
        <end position="87"/>
    </location>
</feature>
<feature type="transmembrane region" description="Helical" evidence="1">
    <location>
        <begin position="89"/>
        <end position="109"/>
    </location>
</feature>
<feature type="transmembrane region" description="Helical" evidence="1">
    <location>
        <begin position="128"/>
        <end position="148"/>
    </location>
</feature>
<feature type="transmembrane region" description="Helical" evidence="1">
    <location>
        <begin position="161"/>
        <end position="181"/>
    </location>
</feature>
<feature type="transmembrane region" description="Helical" evidence="1">
    <location>
        <begin position="195"/>
        <end position="215"/>
    </location>
</feature>
<protein>
    <recommendedName>
        <fullName>Putative amino-acid transporter YisU</fullName>
    </recommendedName>
</protein>
<organism>
    <name type="scientific">Bacillus subtilis (strain 168)</name>
    <dbReference type="NCBI Taxonomy" id="224308"/>
    <lineage>
        <taxon>Bacteria</taxon>
        <taxon>Bacillati</taxon>
        <taxon>Bacillota</taxon>
        <taxon>Bacilli</taxon>
        <taxon>Bacillales</taxon>
        <taxon>Bacillaceae</taxon>
        <taxon>Bacillus</taxon>
    </lineage>
</organism>
<gene>
    <name type="primary">yisU</name>
    <name type="ordered locus">BSU10870</name>
</gene>
<comment type="subcellular location">
    <subcellularLocation>
        <location evidence="2">Cell membrane</location>
        <topology evidence="2">Multi-pass membrane protein</topology>
    </subcellularLocation>
</comment>
<comment type="similarity">
    <text evidence="2">Belongs to the LysE/ArgO transporter (TC 2.A.75) family.</text>
</comment>
<reference key="1">
    <citation type="journal article" date="1997" name="Microbiology">
        <title>A Bacillus subtilis chromosome segment at the 100 degrees to 102 degrees position encoding 11 membrane proteins.</title>
        <authorList>
            <person name="Roche B."/>
            <person name="Autret S."/>
            <person name="Levine A."/>
            <person name="Vannier F."/>
            <person name="Medina N."/>
            <person name="Seror S.J."/>
        </authorList>
    </citation>
    <scope>NUCLEOTIDE SEQUENCE [GENOMIC DNA]</scope>
</reference>
<reference key="2">
    <citation type="journal article" date="1997" name="Nature">
        <title>The complete genome sequence of the Gram-positive bacterium Bacillus subtilis.</title>
        <authorList>
            <person name="Kunst F."/>
            <person name="Ogasawara N."/>
            <person name="Moszer I."/>
            <person name="Albertini A.M."/>
            <person name="Alloni G."/>
            <person name="Azevedo V."/>
            <person name="Bertero M.G."/>
            <person name="Bessieres P."/>
            <person name="Bolotin A."/>
            <person name="Borchert S."/>
            <person name="Borriss R."/>
            <person name="Boursier L."/>
            <person name="Brans A."/>
            <person name="Braun M."/>
            <person name="Brignell S.C."/>
            <person name="Bron S."/>
            <person name="Brouillet S."/>
            <person name="Bruschi C.V."/>
            <person name="Caldwell B."/>
            <person name="Capuano V."/>
            <person name="Carter N.M."/>
            <person name="Choi S.-K."/>
            <person name="Codani J.-J."/>
            <person name="Connerton I.F."/>
            <person name="Cummings N.J."/>
            <person name="Daniel R.A."/>
            <person name="Denizot F."/>
            <person name="Devine K.M."/>
            <person name="Duesterhoeft A."/>
            <person name="Ehrlich S.D."/>
            <person name="Emmerson P.T."/>
            <person name="Entian K.-D."/>
            <person name="Errington J."/>
            <person name="Fabret C."/>
            <person name="Ferrari E."/>
            <person name="Foulger D."/>
            <person name="Fritz C."/>
            <person name="Fujita M."/>
            <person name="Fujita Y."/>
            <person name="Fuma S."/>
            <person name="Galizzi A."/>
            <person name="Galleron N."/>
            <person name="Ghim S.-Y."/>
            <person name="Glaser P."/>
            <person name="Goffeau A."/>
            <person name="Golightly E.J."/>
            <person name="Grandi G."/>
            <person name="Guiseppi G."/>
            <person name="Guy B.J."/>
            <person name="Haga K."/>
            <person name="Haiech J."/>
            <person name="Harwood C.R."/>
            <person name="Henaut A."/>
            <person name="Hilbert H."/>
            <person name="Holsappel S."/>
            <person name="Hosono S."/>
            <person name="Hullo M.-F."/>
            <person name="Itaya M."/>
            <person name="Jones L.-M."/>
            <person name="Joris B."/>
            <person name="Karamata D."/>
            <person name="Kasahara Y."/>
            <person name="Klaerr-Blanchard M."/>
            <person name="Klein C."/>
            <person name="Kobayashi Y."/>
            <person name="Koetter P."/>
            <person name="Koningstein G."/>
            <person name="Krogh S."/>
            <person name="Kumano M."/>
            <person name="Kurita K."/>
            <person name="Lapidus A."/>
            <person name="Lardinois S."/>
            <person name="Lauber J."/>
            <person name="Lazarevic V."/>
            <person name="Lee S.-M."/>
            <person name="Levine A."/>
            <person name="Liu H."/>
            <person name="Masuda S."/>
            <person name="Mauel C."/>
            <person name="Medigue C."/>
            <person name="Medina N."/>
            <person name="Mellado R.P."/>
            <person name="Mizuno M."/>
            <person name="Moestl D."/>
            <person name="Nakai S."/>
            <person name="Noback M."/>
            <person name="Noone D."/>
            <person name="O'Reilly M."/>
            <person name="Ogawa K."/>
            <person name="Ogiwara A."/>
            <person name="Oudega B."/>
            <person name="Park S.-H."/>
            <person name="Parro V."/>
            <person name="Pohl T.M."/>
            <person name="Portetelle D."/>
            <person name="Porwollik S."/>
            <person name="Prescott A.M."/>
            <person name="Presecan E."/>
            <person name="Pujic P."/>
            <person name="Purnelle B."/>
            <person name="Rapoport G."/>
            <person name="Rey M."/>
            <person name="Reynolds S."/>
            <person name="Rieger M."/>
            <person name="Rivolta C."/>
            <person name="Rocha E."/>
            <person name="Roche B."/>
            <person name="Rose M."/>
            <person name="Sadaie Y."/>
            <person name="Sato T."/>
            <person name="Scanlan E."/>
            <person name="Schleich S."/>
            <person name="Schroeter R."/>
            <person name="Scoffone F."/>
            <person name="Sekiguchi J."/>
            <person name="Sekowska A."/>
            <person name="Seror S.J."/>
            <person name="Serror P."/>
            <person name="Shin B.-S."/>
            <person name="Soldo B."/>
            <person name="Sorokin A."/>
            <person name="Tacconi E."/>
            <person name="Takagi T."/>
            <person name="Takahashi H."/>
            <person name="Takemaru K."/>
            <person name="Takeuchi M."/>
            <person name="Tamakoshi A."/>
            <person name="Tanaka T."/>
            <person name="Terpstra P."/>
            <person name="Tognoni A."/>
            <person name="Tosato V."/>
            <person name="Uchiyama S."/>
            <person name="Vandenbol M."/>
            <person name="Vannier F."/>
            <person name="Vassarotti A."/>
            <person name="Viari A."/>
            <person name="Wambutt R."/>
            <person name="Wedler E."/>
            <person name="Wedler H."/>
            <person name="Weitzenegger T."/>
            <person name="Winters P."/>
            <person name="Wipat A."/>
            <person name="Yamamoto H."/>
            <person name="Yamane K."/>
            <person name="Yasumoto K."/>
            <person name="Yata K."/>
            <person name="Yoshida K."/>
            <person name="Yoshikawa H.-F."/>
            <person name="Zumstein E."/>
            <person name="Yoshikawa H."/>
            <person name="Danchin A."/>
        </authorList>
    </citation>
    <scope>NUCLEOTIDE SEQUENCE [LARGE SCALE GENOMIC DNA]</scope>
    <source>
        <strain>168</strain>
    </source>
</reference>
<dbReference type="EMBL" id="Y09476">
    <property type="protein sequence ID" value="CAA70650.1"/>
    <property type="molecule type" value="Genomic_DNA"/>
</dbReference>
<dbReference type="EMBL" id="AL009126">
    <property type="protein sequence ID" value="CAB12926.1"/>
    <property type="molecule type" value="Genomic_DNA"/>
</dbReference>
<dbReference type="PIR" id="D69838">
    <property type="entry name" value="D69838"/>
</dbReference>
<dbReference type="RefSeq" id="NP_388967.1">
    <property type="nucleotide sequence ID" value="NC_000964.3"/>
</dbReference>
<dbReference type="RefSeq" id="WP_009966965.1">
    <property type="nucleotide sequence ID" value="NZ_OZ025638.1"/>
</dbReference>
<dbReference type="FunCoup" id="O06730">
    <property type="interactions" value="112"/>
</dbReference>
<dbReference type="STRING" id="224308.BSU10870"/>
<dbReference type="PaxDb" id="224308-BSU10870"/>
<dbReference type="EnsemblBacteria" id="CAB12926">
    <property type="protein sequence ID" value="CAB12926"/>
    <property type="gene ID" value="BSU_10870"/>
</dbReference>
<dbReference type="GeneID" id="939338"/>
<dbReference type="KEGG" id="bsu:BSU10870"/>
<dbReference type="PATRIC" id="fig|224308.43.peg.1134"/>
<dbReference type="eggNOG" id="COG1279">
    <property type="taxonomic scope" value="Bacteria"/>
</dbReference>
<dbReference type="InParanoid" id="O06730"/>
<dbReference type="OrthoDB" id="5638726at2"/>
<dbReference type="PhylomeDB" id="O06730"/>
<dbReference type="BioCyc" id="BSUB:BSU10870-MONOMER"/>
<dbReference type="Proteomes" id="UP000001570">
    <property type="component" value="Chromosome"/>
</dbReference>
<dbReference type="GO" id="GO:0005886">
    <property type="term" value="C:plasma membrane"/>
    <property type="evidence" value="ECO:0000318"/>
    <property type="project" value="GO_Central"/>
</dbReference>
<dbReference type="GO" id="GO:0015171">
    <property type="term" value="F:amino acid transmembrane transporter activity"/>
    <property type="evidence" value="ECO:0000318"/>
    <property type="project" value="GO_Central"/>
</dbReference>
<dbReference type="GO" id="GO:0006865">
    <property type="term" value="P:amino acid transport"/>
    <property type="evidence" value="ECO:0000318"/>
    <property type="project" value="GO_Central"/>
</dbReference>
<dbReference type="InterPro" id="IPR001123">
    <property type="entry name" value="LeuE-type"/>
</dbReference>
<dbReference type="PANTHER" id="PTHR30086">
    <property type="entry name" value="ARGININE EXPORTER PROTEIN ARGO"/>
    <property type="match status" value="1"/>
</dbReference>
<dbReference type="PANTHER" id="PTHR30086:SF20">
    <property type="entry name" value="ARGININE EXPORTER PROTEIN ARGO-RELATED"/>
    <property type="match status" value="1"/>
</dbReference>
<dbReference type="Pfam" id="PF01810">
    <property type="entry name" value="LysE"/>
    <property type="match status" value="1"/>
</dbReference>
<proteinExistence type="inferred from homology"/>
<keyword id="KW-0029">Amino-acid transport</keyword>
<keyword id="KW-1003">Cell membrane</keyword>
<keyword id="KW-0472">Membrane</keyword>
<keyword id="KW-1185">Reference proteome</keyword>
<keyword id="KW-0812">Transmembrane</keyword>
<keyword id="KW-1133">Transmembrane helix</keyword>
<keyword id="KW-0813">Transport</keyword>
<accession>O06730</accession>
<accession>Q796Q7</accession>
<name>YISU_BACSU</name>